<proteinExistence type="evidence at protein level"/>
<organism>
    <name type="scientific">Rhodopseudomonas palustris (strain ATCC BAA-98 / CGA009)</name>
    <dbReference type="NCBI Taxonomy" id="258594"/>
    <lineage>
        <taxon>Bacteria</taxon>
        <taxon>Pseudomonadati</taxon>
        <taxon>Pseudomonadota</taxon>
        <taxon>Alphaproteobacteria</taxon>
        <taxon>Hyphomicrobiales</taxon>
        <taxon>Nitrobacteraceae</taxon>
        <taxon>Rhodopseudomonas</taxon>
    </lineage>
</organism>
<feature type="initiator methionine" description="Removed">
    <location>
        <position position="1"/>
    </location>
</feature>
<feature type="chain" id="PRO_0000132445" description="Small ribosomal subunit protein uS4">
    <location>
        <begin position="2"/>
        <end position="205"/>
    </location>
</feature>
<feature type="domain" description="S4 RNA-binding" evidence="1">
    <location>
        <begin position="94"/>
        <end position="157"/>
    </location>
</feature>
<feature type="region of interest" description="Disordered" evidence="2">
    <location>
        <begin position="19"/>
        <end position="45"/>
    </location>
</feature>
<protein>
    <recommendedName>
        <fullName evidence="1">Small ribosomal subunit protein uS4</fullName>
    </recommendedName>
    <alternativeName>
        <fullName evidence="4">30S ribosomal protein S4</fullName>
    </alternativeName>
    <alternativeName>
        <fullName>RRP-S4</fullName>
    </alternativeName>
</protein>
<name>RS4_RHOPA</name>
<keyword id="KW-0687">Ribonucleoprotein</keyword>
<keyword id="KW-0689">Ribosomal protein</keyword>
<keyword id="KW-0694">RNA-binding</keyword>
<keyword id="KW-0699">rRNA-binding</keyword>
<reference key="1">
    <citation type="journal article" date="2004" name="Nat. Biotechnol.">
        <title>Complete genome sequence of the metabolically versatile photosynthetic bacterium Rhodopseudomonas palustris.</title>
        <authorList>
            <person name="Larimer F.W."/>
            <person name="Chain P."/>
            <person name="Hauser L."/>
            <person name="Lamerdin J.E."/>
            <person name="Malfatti S."/>
            <person name="Do L."/>
            <person name="Land M.L."/>
            <person name="Pelletier D.A."/>
            <person name="Beatty J.T."/>
            <person name="Lang A.S."/>
            <person name="Tabita F.R."/>
            <person name="Gibson J.L."/>
            <person name="Hanson T.E."/>
            <person name="Bobst C."/>
            <person name="Torres y Torres J.L."/>
            <person name="Peres C."/>
            <person name="Harrison F.H."/>
            <person name="Gibson J."/>
            <person name="Harwood C.S."/>
        </authorList>
    </citation>
    <scope>NUCLEOTIDE SEQUENCE [LARGE SCALE GENOMIC DNA]</scope>
    <source>
        <strain>ATCC BAA-98 / CGA009</strain>
    </source>
</reference>
<reference key="2">
    <citation type="journal article" date="2004" name="J. Proteome Res.">
        <title>Characterization of the 70S ribosome from Rhodopseudomonas palustris using an integrated 'top-down' and 'bottom-up' mass spectrometric approach.</title>
        <authorList>
            <person name="Strader M.B."/>
            <person name="VerBerkmoes N.C."/>
            <person name="Tabb D.L."/>
            <person name="Connelly H.M."/>
            <person name="Barton J.W."/>
            <person name="Bruce B.D."/>
            <person name="Pelletier D.A."/>
            <person name="Davison B.H."/>
            <person name="Hettich R.L."/>
            <person name="Larimer F.W."/>
            <person name="Hurst G.B."/>
        </authorList>
    </citation>
    <scope>MASS SPECTROMETRY</scope>
    <source>
        <strain>ATCC BAA-98 / CGA009</strain>
    </source>
</reference>
<accession>Q6N9G0</accession>
<evidence type="ECO:0000255" key="1">
    <source>
        <dbReference type="HAMAP-Rule" id="MF_01306"/>
    </source>
</evidence>
<evidence type="ECO:0000256" key="2">
    <source>
        <dbReference type="SAM" id="MobiDB-lite"/>
    </source>
</evidence>
<evidence type="ECO:0000269" key="3">
    <source>
    </source>
</evidence>
<evidence type="ECO:0000305" key="4"/>
<sequence>MTKRAEAKYKIDRRMGQNIWGRPKSPVNRREYGPGQHGQRRKGKLSDFGVQLRAKQKLKGYYANISERQFHAIYVEATRLKGDSGENLIGLLERRLDAVVYRAKFVSTMFAARQFINHGHIKVNGKRVNIPSYKVRVGDVIEVKEASKQLAFVLEASQLAERDVPDYIEVDHNKMTAKFARIPALSDVPFAVQMEPHLIVEFYSR</sequence>
<dbReference type="EMBL" id="BX572598">
    <property type="protein sequence ID" value="CAE27030.1"/>
    <property type="molecule type" value="Genomic_DNA"/>
</dbReference>
<dbReference type="RefSeq" id="WP_011157148.1">
    <property type="nucleotide sequence ID" value="NZ_CP116810.1"/>
</dbReference>
<dbReference type="SMR" id="Q6N9G0"/>
<dbReference type="IntAct" id="Q6N9G0">
    <property type="interactions" value="1"/>
</dbReference>
<dbReference type="STRING" id="258594.RPA1589"/>
<dbReference type="GeneID" id="66892619"/>
<dbReference type="eggNOG" id="COG0522">
    <property type="taxonomic scope" value="Bacteria"/>
</dbReference>
<dbReference type="HOGENOM" id="CLU_092403_0_0_5"/>
<dbReference type="PhylomeDB" id="Q6N9G0"/>
<dbReference type="GO" id="GO:0015935">
    <property type="term" value="C:small ribosomal subunit"/>
    <property type="evidence" value="ECO:0007669"/>
    <property type="project" value="InterPro"/>
</dbReference>
<dbReference type="GO" id="GO:0019843">
    <property type="term" value="F:rRNA binding"/>
    <property type="evidence" value="ECO:0007669"/>
    <property type="project" value="UniProtKB-UniRule"/>
</dbReference>
<dbReference type="GO" id="GO:0003735">
    <property type="term" value="F:structural constituent of ribosome"/>
    <property type="evidence" value="ECO:0007669"/>
    <property type="project" value="InterPro"/>
</dbReference>
<dbReference type="GO" id="GO:0042274">
    <property type="term" value="P:ribosomal small subunit biogenesis"/>
    <property type="evidence" value="ECO:0007669"/>
    <property type="project" value="TreeGrafter"/>
</dbReference>
<dbReference type="GO" id="GO:0006412">
    <property type="term" value="P:translation"/>
    <property type="evidence" value="ECO:0007669"/>
    <property type="project" value="UniProtKB-UniRule"/>
</dbReference>
<dbReference type="CDD" id="cd00165">
    <property type="entry name" value="S4"/>
    <property type="match status" value="1"/>
</dbReference>
<dbReference type="FunFam" id="3.10.290.10:FF:000001">
    <property type="entry name" value="30S ribosomal protein S4"/>
    <property type="match status" value="1"/>
</dbReference>
<dbReference type="Gene3D" id="1.10.1050.10">
    <property type="entry name" value="Ribosomal Protein S4 Delta 41, Chain A, domain 1"/>
    <property type="match status" value="1"/>
</dbReference>
<dbReference type="Gene3D" id="3.10.290.10">
    <property type="entry name" value="RNA-binding S4 domain"/>
    <property type="match status" value="1"/>
</dbReference>
<dbReference type="HAMAP" id="MF_01306_B">
    <property type="entry name" value="Ribosomal_uS4_B"/>
    <property type="match status" value="1"/>
</dbReference>
<dbReference type="InterPro" id="IPR022801">
    <property type="entry name" value="Ribosomal_uS4"/>
</dbReference>
<dbReference type="InterPro" id="IPR005709">
    <property type="entry name" value="Ribosomal_uS4_bac-type"/>
</dbReference>
<dbReference type="InterPro" id="IPR018079">
    <property type="entry name" value="Ribosomal_uS4_CS"/>
</dbReference>
<dbReference type="InterPro" id="IPR001912">
    <property type="entry name" value="Ribosomal_uS4_N"/>
</dbReference>
<dbReference type="InterPro" id="IPR002942">
    <property type="entry name" value="S4_RNA-bd"/>
</dbReference>
<dbReference type="InterPro" id="IPR036986">
    <property type="entry name" value="S4_RNA-bd_sf"/>
</dbReference>
<dbReference type="NCBIfam" id="NF003717">
    <property type="entry name" value="PRK05327.1"/>
    <property type="match status" value="1"/>
</dbReference>
<dbReference type="NCBIfam" id="TIGR01017">
    <property type="entry name" value="rpsD_bact"/>
    <property type="match status" value="1"/>
</dbReference>
<dbReference type="PANTHER" id="PTHR11831">
    <property type="entry name" value="30S 40S RIBOSOMAL PROTEIN"/>
    <property type="match status" value="1"/>
</dbReference>
<dbReference type="PANTHER" id="PTHR11831:SF4">
    <property type="entry name" value="SMALL RIBOSOMAL SUBUNIT PROTEIN US4M"/>
    <property type="match status" value="1"/>
</dbReference>
<dbReference type="Pfam" id="PF00163">
    <property type="entry name" value="Ribosomal_S4"/>
    <property type="match status" value="1"/>
</dbReference>
<dbReference type="Pfam" id="PF01479">
    <property type="entry name" value="S4"/>
    <property type="match status" value="1"/>
</dbReference>
<dbReference type="SMART" id="SM01390">
    <property type="entry name" value="Ribosomal_S4"/>
    <property type="match status" value="1"/>
</dbReference>
<dbReference type="SMART" id="SM00363">
    <property type="entry name" value="S4"/>
    <property type="match status" value="1"/>
</dbReference>
<dbReference type="SUPFAM" id="SSF55174">
    <property type="entry name" value="Alpha-L RNA-binding motif"/>
    <property type="match status" value="1"/>
</dbReference>
<dbReference type="PROSITE" id="PS00632">
    <property type="entry name" value="RIBOSOMAL_S4"/>
    <property type="match status" value="1"/>
</dbReference>
<dbReference type="PROSITE" id="PS50889">
    <property type="entry name" value="S4"/>
    <property type="match status" value="1"/>
</dbReference>
<comment type="function">
    <text evidence="1">One of the primary rRNA binding proteins, it binds directly to 16S rRNA where it nucleates assembly of the body of the 30S subunit.</text>
</comment>
<comment type="function">
    <text evidence="1">With S5 and S12 plays an important role in translational accuracy.</text>
</comment>
<comment type="subunit">
    <text evidence="1">Part of the 30S ribosomal subunit. Contacts protein S5. The interaction surface between S4 and S5 is involved in control of translational fidelity.</text>
</comment>
<comment type="PTM">
    <text>May be methylated on an undetermined residue.</text>
</comment>
<comment type="mass spectrometry"/>
<comment type="similarity">
    <text evidence="1">Belongs to the universal ribosomal protein uS4 family.</text>
</comment>
<gene>
    <name evidence="1" type="primary">rpsD</name>
    <name type="ordered locus">RPA1589</name>
</gene>